<comment type="function">
    <text evidence="1">This is one of the proteins that bind and probably mediate the attachment of the 5S RNA into the large ribosomal subunit, where it forms part of the central protuberance.</text>
</comment>
<comment type="subunit">
    <text evidence="1">Part of the 50S ribosomal subunit; part of the 5S rRNA/L5/L18/L25 subcomplex. Contacts the 5S and 23S rRNAs.</text>
</comment>
<comment type="similarity">
    <text evidence="1">Belongs to the universal ribosomal protein uL18 family.</text>
</comment>
<dbReference type="EMBL" id="AM295250">
    <property type="protein sequence ID" value="CAL28625.1"/>
    <property type="molecule type" value="Genomic_DNA"/>
</dbReference>
<dbReference type="RefSeq" id="WP_015900963.1">
    <property type="nucleotide sequence ID" value="NC_012121.1"/>
</dbReference>
<dbReference type="SMR" id="B9DM31"/>
<dbReference type="GeneID" id="93794178"/>
<dbReference type="KEGG" id="sca:SCA_1719"/>
<dbReference type="eggNOG" id="COG0256">
    <property type="taxonomic scope" value="Bacteria"/>
</dbReference>
<dbReference type="HOGENOM" id="CLU_098841_0_1_9"/>
<dbReference type="OrthoDB" id="9810939at2"/>
<dbReference type="BioCyc" id="SCAR396513:SCA_RS08760-MONOMER"/>
<dbReference type="Proteomes" id="UP000000444">
    <property type="component" value="Chromosome"/>
</dbReference>
<dbReference type="GO" id="GO:0022625">
    <property type="term" value="C:cytosolic large ribosomal subunit"/>
    <property type="evidence" value="ECO:0007669"/>
    <property type="project" value="TreeGrafter"/>
</dbReference>
<dbReference type="GO" id="GO:0008097">
    <property type="term" value="F:5S rRNA binding"/>
    <property type="evidence" value="ECO:0007669"/>
    <property type="project" value="TreeGrafter"/>
</dbReference>
<dbReference type="GO" id="GO:0003735">
    <property type="term" value="F:structural constituent of ribosome"/>
    <property type="evidence" value="ECO:0007669"/>
    <property type="project" value="InterPro"/>
</dbReference>
<dbReference type="GO" id="GO:0006412">
    <property type="term" value="P:translation"/>
    <property type="evidence" value="ECO:0007669"/>
    <property type="project" value="UniProtKB-UniRule"/>
</dbReference>
<dbReference type="CDD" id="cd00432">
    <property type="entry name" value="Ribosomal_L18_L5e"/>
    <property type="match status" value="1"/>
</dbReference>
<dbReference type="FunFam" id="3.30.420.100:FF:000001">
    <property type="entry name" value="50S ribosomal protein L18"/>
    <property type="match status" value="1"/>
</dbReference>
<dbReference type="Gene3D" id="3.30.420.100">
    <property type="match status" value="1"/>
</dbReference>
<dbReference type="HAMAP" id="MF_01337_B">
    <property type="entry name" value="Ribosomal_uL18_B"/>
    <property type="match status" value="1"/>
</dbReference>
<dbReference type="InterPro" id="IPR004389">
    <property type="entry name" value="Ribosomal_uL18_bac-type"/>
</dbReference>
<dbReference type="InterPro" id="IPR005484">
    <property type="entry name" value="Ribosomal_uL18_bac/euk"/>
</dbReference>
<dbReference type="NCBIfam" id="TIGR00060">
    <property type="entry name" value="L18_bact"/>
    <property type="match status" value="1"/>
</dbReference>
<dbReference type="PANTHER" id="PTHR12899">
    <property type="entry name" value="39S RIBOSOMAL PROTEIN L18, MITOCHONDRIAL"/>
    <property type="match status" value="1"/>
</dbReference>
<dbReference type="PANTHER" id="PTHR12899:SF3">
    <property type="entry name" value="LARGE RIBOSOMAL SUBUNIT PROTEIN UL18M"/>
    <property type="match status" value="1"/>
</dbReference>
<dbReference type="Pfam" id="PF00861">
    <property type="entry name" value="Ribosomal_L18p"/>
    <property type="match status" value="1"/>
</dbReference>
<dbReference type="SUPFAM" id="SSF53137">
    <property type="entry name" value="Translational machinery components"/>
    <property type="match status" value="1"/>
</dbReference>
<reference key="1">
    <citation type="journal article" date="2009" name="Appl. Environ. Microbiol.">
        <title>Genome analysis of the meat starter culture bacterium Staphylococcus carnosus TM300.</title>
        <authorList>
            <person name="Rosenstein R."/>
            <person name="Nerz C."/>
            <person name="Biswas L."/>
            <person name="Resch A."/>
            <person name="Raddatz G."/>
            <person name="Schuster S.C."/>
            <person name="Goetz F."/>
        </authorList>
    </citation>
    <scope>NUCLEOTIDE SEQUENCE [LARGE SCALE GENOMIC DNA]</scope>
    <source>
        <strain>TM300</strain>
    </source>
</reference>
<feature type="chain" id="PRO_1000166248" description="Large ribosomal subunit protein uL18">
    <location>
        <begin position="1"/>
        <end position="120"/>
    </location>
</feature>
<gene>
    <name evidence="1" type="primary">rplR</name>
    <name type="ordered locus">Sca_1719</name>
</gene>
<accession>B9DM31</accession>
<proteinExistence type="inferred from homology"/>
<evidence type="ECO:0000255" key="1">
    <source>
        <dbReference type="HAMAP-Rule" id="MF_01337"/>
    </source>
</evidence>
<evidence type="ECO:0000305" key="2"/>
<sequence length="120" mass="13345">MISKIDKNKVRLKRHARVRSNLSGTAQKPRLNVYRSNKHIYAQIIDDTKGVTLVQASTQDKDFENETGSKVELSSKVGEAIAKKAADKGITEIVFDRGGYLYHGRVKALADAARENGLQF</sequence>
<keyword id="KW-1185">Reference proteome</keyword>
<keyword id="KW-0687">Ribonucleoprotein</keyword>
<keyword id="KW-0689">Ribosomal protein</keyword>
<keyword id="KW-0694">RNA-binding</keyword>
<keyword id="KW-0699">rRNA-binding</keyword>
<name>RL18_STACT</name>
<protein>
    <recommendedName>
        <fullName evidence="1">Large ribosomal subunit protein uL18</fullName>
    </recommendedName>
    <alternativeName>
        <fullName evidence="2">50S ribosomal protein L18</fullName>
    </alternativeName>
</protein>
<organism>
    <name type="scientific">Staphylococcus carnosus (strain TM300)</name>
    <dbReference type="NCBI Taxonomy" id="396513"/>
    <lineage>
        <taxon>Bacteria</taxon>
        <taxon>Bacillati</taxon>
        <taxon>Bacillota</taxon>
        <taxon>Bacilli</taxon>
        <taxon>Bacillales</taxon>
        <taxon>Staphylococcaceae</taxon>
        <taxon>Staphylococcus</taxon>
    </lineage>
</organism>